<name>MUTS2_BACC0</name>
<accession>B7JR57</accession>
<evidence type="ECO:0000255" key="1">
    <source>
        <dbReference type="HAMAP-Rule" id="MF_00092"/>
    </source>
</evidence>
<keyword id="KW-0067">ATP-binding</keyword>
<keyword id="KW-0238">DNA-binding</keyword>
<keyword id="KW-0255">Endonuclease</keyword>
<keyword id="KW-0378">Hydrolase</keyword>
<keyword id="KW-0540">Nuclease</keyword>
<keyword id="KW-0547">Nucleotide-binding</keyword>
<keyword id="KW-0694">RNA-binding</keyword>
<keyword id="KW-0699">rRNA-binding</keyword>
<gene>
    <name evidence="1" type="primary">mutS2</name>
    <name evidence="1" type="synonym">rqcU</name>
    <name type="ordered locus">BCAH820_4665</name>
</gene>
<proteinExistence type="inferred from homology"/>
<dbReference type="EC" id="3.1.-.-" evidence="1"/>
<dbReference type="EC" id="3.6.4.-" evidence="1"/>
<dbReference type="EMBL" id="CP001283">
    <property type="protein sequence ID" value="ACK88285.1"/>
    <property type="molecule type" value="Genomic_DNA"/>
</dbReference>
<dbReference type="RefSeq" id="WP_000893732.1">
    <property type="nucleotide sequence ID" value="NC_011773.1"/>
</dbReference>
<dbReference type="SMR" id="B7JR57"/>
<dbReference type="KEGG" id="bcu:BCAH820_4665"/>
<dbReference type="HOGENOM" id="CLU_011252_2_1_9"/>
<dbReference type="Proteomes" id="UP000001363">
    <property type="component" value="Chromosome"/>
</dbReference>
<dbReference type="GO" id="GO:0005524">
    <property type="term" value="F:ATP binding"/>
    <property type="evidence" value="ECO:0007669"/>
    <property type="project" value="UniProtKB-UniRule"/>
</dbReference>
<dbReference type="GO" id="GO:0016887">
    <property type="term" value="F:ATP hydrolysis activity"/>
    <property type="evidence" value="ECO:0007669"/>
    <property type="project" value="InterPro"/>
</dbReference>
<dbReference type="GO" id="GO:0140664">
    <property type="term" value="F:ATP-dependent DNA damage sensor activity"/>
    <property type="evidence" value="ECO:0007669"/>
    <property type="project" value="InterPro"/>
</dbReference>
<dbReference type="GO" id="GO:0004519">
    <property type="term" value="F:endonuclease activity"/>
    <property type="evidence" value="ECO:0007669"/>
    <property type="project" value="UniProtKB-UniRule"/>
</dbReference>
<dbReference type="GO" id="GO:0030983">
    <property type="term" value="F:mismatched DNA binding"/>
    <property type="evidence" value="ECO:0007669"/>
    <property type="project" value="InterPro"/>
</dbReference>
<dbReference type="GO" id="GO:0043023">
    <property type="term" value="F:ribosomal large subunit binding"/>
    <property type="evidence" value="ECO:0007669"/>
    <property type="project" value="UniProtKB-UniRule"/>
</dbReference>
<dbReference type="GO" id="GO:0019843">
    <property type="term" value="F:rRNA binding"/>
    <property type="evidence" value="ECO:0007669"/>
    <property type="project" value="UniProtKB-UniRule"/>
</dbReference>
<dbReference type="GO" id="GO:0006298">
    <property type="term" value="P:mismatch repair"/>
    <property type="evidence" value="ECO:0007669"/>
    <property type="project" value="InterPro"/>
</dbReference>
<dbReference type="GO" id="GO:0045910">
    <property type="term" value="P:negative regulation of DNA recombination"/>
    <property type="evidence" value="ECO:0007669"/>
    <property type="project" value="InterPro"/>
</dbReference>
<dbReference type="GO" id="GO:0072344">
    <property type="term" value="P:rescue of stalled ribosome"/>
    <property type="evidence" value="ECO:0007669"/>
    <property type="project" value="UniProtKB-UniRule"/>
</dbReference>
<dbReference type="CDD" id="cd03280">
    <property type="entry name" value="ABC_MutS2"/>
    <property type="match status" value="1"/>
</dbReference>
<dbReference type="CDD" id="cd06503">
    <property type="entry name" value="ATP-synt_Fo_b"/>
    <property type="match status" value="1"/>
</dbReference>
<dbReference type="FunFam" id="3.40.50.300:FF:000830">
    <property type="entry name" value="Endonuclease MutS2"/>
    <property type="match status" value="1"/>
</dbReference>
<dbReference type="Gene3D" id="1.10.1420.10">
    <property type="match status" value="2"/>
</dbReference>
<dbReference type="Gene3D" id="3.30.1370.110">
    <property type="match status" value="1"/>
</dbReference>
<dbReference type="Gene3D" id="3.40.50.300">
    <property type="entry name" value="P-loop containing nucleotide triphosphate hydrolases"/>
    <property type="match status" value="1"/>
</dbReference>
<dbReference type="HAMAP" id="MF_00092">
    <property type="entry name" value="MutS2"/>
    <property type="match status" value="1"/>
</dbReference>
<dbReference type="InterPro" id="IPR000432">
    <property type="entry name" value="DNA_mismatch_repair_MutS_C"/>
</dbReference>
<dbReference type="InterPro" id="IPR007696">
    <property type="entry name" value="DNA_mismatch_repair_MutS_core"/>
</dbReference>
<dbReference type="InterPro" id="IPR036187">
    <property type="entry name" value="DNA_mismatch_repair_MutS_sf"/>
</dbReference>
<dbReference type="InterPro" id="IPR046893">
    <property type="entry name" value="MSSS"/>
</dbReference>
<dbReference type="InterPro" id="IPR045076">
    <property type="entry name" value="MutS"/>
</dbReference>
<dbReference type="InterPro" id="IPR005747">
    <property type="entry name" value="MutS2"/>
</dbReference>
<dbReference type="InterPro" id="IPR027417">
    <property type="entry name" value="P-loop_NTPase"/>
</dbReference>
<dbReference type="InterPro" id="IPR002625">
    <property type="entry name" value="Smr_dom"/>
</dbReference>
<dbReference type="InterPro" id="IPR036063">
    <property type="entry name" value="Smr_dom_sf"/>
</dbReference>
<dbReference type="NCBIfam" id="TIGR01069">
    <property type="entry name" value="mutS2"/>
    <property type="match status" value="1"/>
</dbReference>
<dbReference type="PANTHER" id="PTHR48466:SF2">
    <property type="entry name" value="OS10G0509000 PROTEIN"/>
    <property type="match status" value="1"/>
</dbReference>
<dbReference type="PANTHER" id="PTHR48466">
    <property type="entry name" value="OS10G0509000 PROTEIN-RELATED"/>
    <property type="match status" value="1"/>
</dbReference>
<dbReference type="Pfam" id="PF20297">
    <property type="entry name" value="MSSS"/>
    <property type="match status" value="1"/>
</dbReference>
<dbReference type="Pfam" id="PF00488">
    <property type="entry name" value="MutS_V"/>
    <property type="match status" value="1"/>
</dbReference>
<dbReference type="Pfam" id="PF01713">
    <property type="entry name" value="Smr"/>
    <property type="match status" value="1"/>
</dbReference>
<dbReference type="PIRSF" id="PIRSF005814">
    <property type="entry name" value="MutS_YshD"/>
    <property type="match status" value="1"/>
</dbReference>
<dbReference type="SMART" id="SM00534">
    <property type="entry name" value="MUTSac"/>
    <property type="match status" value="1"/>
</dbReference>
<dbReference type="SMART" id="SM00533">
    <property type="entry name" value="MUTSd"/>
    <property type="match status" value="1"/>
</dbReference>
<dbReference type="SMART" id="SM00463">
    <property type="entry name" value="SMR"/>
    <property type="match status" value="1"/>
</dbReference>
<dbReference type="SUPFAM" id="SSF48334">
    <property type="entry name" value="DNA repair protein MutS, domain III"/>
    <property type="match status" value="1"/>
</dbReference>
<dbReference type="SUPFAM" id="SSF52540">
    <property type="entry name" value="P-loop containing nucleoside triphosphate hydrolases"/>
    <property type="match status" value="1"/>
</dbReference>
<dbReference type="SUPFAM" id="SSF160443">
    <property type="entry name" value="SMR domain-like"/>
    <property type="match status" value="1"/>
</dbReference>
<dbReference type="PROSITE" id="PS00486">
    <property type="entry name" value="DNA_MISMATCH_REPAIR_2"/>
    <property type="match status" value="1"/>
</dbReference>
<dbReference type="PROSITE" id="PS50828">
    <property type="entry name" value="SMR"/>
    <property type="match status" value="1"/>
</dbReference>
<organism>
    <name type="scientific">Bacillus cereus (strain AH820)</name>
    <dbReference type="NCBI Taxonomy" id="405535"/>
    <lineage>
        <taxon>Bacteria</taxon>
        <taxon>Bacillati</taxon>
        <taxon>Bacillota</taxon>
        <taxon>Bacilli</taxon>
        <taxon>Bacillales</taxon>
        <taxon>Bacillaceae</taxon>
        <taxon>Bacillus</taxon>
        <taxon>Bacillus cereus group</taxon>
    </lineage>
</organism>
<reference key="1">
    <citation type="submission" date="2008-10" db="EMBL/GenBank/DDBJ databases">
        <title>Genome sequence of Bacillus cereus AH820.</title>
        <authorList>
            <person name="Dodson R.J."/>
            <person name="Durkin A.S."/>
            <person name="Rosovitz M.J."/>
            <person name="Rasko D.A."/>
            <person name="Hoffmaster A."/>
            <person name="Ravel J."/>
            <person name="Sutton G."/>
        </authorList>
    </citation>
    <scope>NUCLEOTIDE SEQUENCE [LARGE SCALE GENOMIC DNA]</scope>
    <source>
        <strain>AH820</strain>
    </source>
</reference>
<feature type="chain" id="PRO_1000117224" description="Endonuclease MutS2">
    <location>
        <begin position="1"/>
        <end position="786"/>
    </location>
</feature>
<feature type="domain" description="Smr" evidence="1">
    <location>
        <begin position="711"/>
        <end position="786"/>
    </location>
</feature>
<feature type="binding site" evidence="1">
    <location>
        <begin position="335"/>
        <end position="342"/>
    </location>
    <ligand>
        <name>ATP</name>
        <dbReference type="ChEBI" id="CHEBI:30616"/>
    </ligand>
</feature>
<sequence>MLERTLRVLEYNKVKEQLLEHTASSLGRDKVKHLVPSTDFEEIVEMQDTTDEAAKVIRLKGSAPLGGITDIRSNVKRAKIGSMLSPNELLDIANTMYGSRNMKRFIEDMVDNGVELPILETHVAQIVSLYDLEKKITNCIGDGGEVVDSASDKLRGIRTQIRTAESRIREKLENMTRSSNAQKMLSDSIVTIRNERYVIPVKQEYRGVYGGIVHDQSASGQTLFIEPQVIVELNNALQEARVKEKQEIERILLMLTEEVAVEADIVLSNVEVVANLDFIFAKAFYAKRIKATKPIVNNERYMDLRQARHPLIDPEVIVPNNIMLGKDFTTIVITGPNTGGKTVTLKTVGICVLMAQSGLHIPVMDESEICVFKNIFADIGDEQSIEQSLSTFSSHMVNIVDILEKADFESLVLFDELGAGTDPQEGAALAISILDEVCNRGARVVATTHYPELKAYGYNREQVINASVEFDVNTLSPTYKLLIGVPGRSNAFEISKRLGLSDRVIDQARNHISTDTNKIENMIAKLEESQKNAERDWNEAEALRKQSEKLHRELQRQIIEFNEERDERLLKAQKEGEEKVEAAKKEAEGIIQELRQLRKAQLANVKDHELIEAKSRLEGAAPELVKKQKVNVKNTSPKQQLRAGDEVKVLTFGQKGQLLEKVSDTEWSVQIGILKMKVKESNMEYINTPKQTEKKAVATVKGRDYHVSLELDLRGERFENAMARVEKYLDDAQLASYPRVSIIHGKGTGALRQGVQDYLKKHRGVKTFRYGDMGEGGLGVTVVELK</sequence>
<comment type="function">
    <text evidence="1">Endonuclease that is involved in the suppression of homologous recombination and thus may have a key role in the control of bacterial genetic diversity.</text>
</comment>
<comment type="function">
    <text evidence="1">Acts as a ribosome collision sensor, splitting the ribosome into its 2 subunits. Detects stalled/collided 70S ribosomes which it binds and splits by an ATP-hydrolysis driven conformational change. Acts upstream of the ribosome quality control system (RQC), a ribosome-associated complex that mediates the extraction of incompletely synthesized nascent chains from stalled ribosomes and their subsequent degradation. Probably generates substrates for RQC.</text>
</comment>
<comment type="subunit">
    <text evidence="1">Homodimer. Binds to stalled ribosomes, contacting rRNA.</text>
</comment>
<comment type="similarity">
    <text evidence="1">Belongs to the DNA mismatch repair MutS family. MutS2 subfamily.</text>
</comment>
<protein>
    <recommendedName>
        <fullName evidence="1">Endonuclease MutS2</fullName>
        <ecNumber evidence="1">3.1.-.-</ecNumber>
    </recommendedName>
    <alternativeName>
        <fullName evidence="1">Ribosome-associated protein quality control-upstream factor</fullName>
        <shortName evidence="1">RQC-upstream factor</shortName>
        <shortName evidence="1">RqcU</shortName>
        <ecNumber evidence="1">3.6.4.-</ecNumber>
    </alternativeName>
</protein>